<reference key="1">
    <citation type="journal article" date="2005" name="Science">
        <title>The genome of the basidiomycetous yeast and human pathogen Cryptococcus neoformans.</title>
        <authorList>
            <person name="Loftus B.J."/>
            <person name="Fung E."/>
            <person name="Roncaglia P."/>
            <person name="Rowley D."/>
            <person name="Amedeo P."/>
            <person name="Bruno D."/>
            <person name="Vamathevan J."/>
            <person name="Miranda M."/>
            <person name="Anderson I.J."/>
            <person name="Fraser J.A."/>
            <person name="Allen J.E."/>
            <person name="Bosdet I.E."/>
            <person name="Brent M.R."/>
            <person name="Chiu R."/>
            <person name="Doering T.L."/>
            <person name="Donlin M.J."/>
            <person name="D'Souza C.A."/>
            <person name="Fox D.S."/>
            <person name="Grinberg V."/>
            <person name="Fu J."/>
            <person name="Fukushima M."/>
            <person name="Haas B.J."/>
            <person name="Huang J.C."/>
            <person name="Janbon G."/>
            <person name="Jones S.J.M."/>
            <person name="Koo H.L."/>
            <person name="Krzywinski M.I."/>
            <person name="Kwon-Chung K.J."/>
            <person name="Lengeler K.B."/>
            <person name="Maiti R."/>
            <person name="Marra M.A."/>
            <person name="Marra R.E."/>
            <person name="Mathewson C.A."/>
            <person name="Mitchell T.G."/>
            <person name="Pertea M."/>
            <person name="Riggs F.R."/>
            <person name="Salzberg S.L."/>
            <person name="Schein J.E."/>
            <person name="Shvartsbeyn A."/>
            <person name="Shin H."/>
            <person name="Shumway M."/>
            <person name="Specht C.A."/>
            <person name="Suh B.B."/>
            <person name="Tenney A."/>
            <person name="Utterback T.R."/>
            <person name="Wickes B.L."/>
            <person name="Wortman J.R."/>
            <person name="Wye N.H."/>
            <person name="Kronstad J.W."/>
            <person name="Lodge J.K."/>
            <person name="Heitman J."/>
            <person name="Davis R.W."/>
            <person name="Fraser C.M."/>
            <person name="Hyman R.W."/>
        </authorList>
    </citation>
    <scope>NUCLEOTIDE SEQUENCE [LARGE SCALE GENOMIC DNA]</scope>
    <source>
        <strain>B-3501A</strain>
    </source>
</reference>
<comment type="function">
    <text evidence="1">Common component of the spliceosome and rRNA processing machinery. In association with the spliceosomal U4/U6.U5 tri-snRNP particle, required for splicing of pre-mRNA. In association with box C/D snoRNPs, required for processing of pre-ribosomal RNA (rRNA) and site-specific 2'-O-methylation of substrate RNAs. Essential for the accumulation and stability of U4 snRNA, U6 snRNA, and box C/D snoRNAs (By similarity).</text>
</comment>
<comment type="subunit">
    <text evidence="1">Component of the U3 snoRNP particle. Binds to the C'/D and B/C motifs in U3 snoRNA. Component of the 25S U4/U6.U5 tri-snRNP particle, a subcomplex of the spliceosome. Binds to the 5' stem-loop of U4 snRNA (By similarity).</text>
</comment>
<comment type="subcellular location">
    <subcellularLocation>
        <location evidence="1">Nucleus</location>
        <location evidence="1">Nucleolus</location>
    </subcellularLocation>
</comment>
<comment type="similarity">
    <text evidence="2">Belongs to the eukaryotic ribosomal protein eL8 family.</text>
</comment>
<evidence type="ECO:0000250" key="1"/>
<evidence type="ECO:0000305" key="2"/>
<accession>P0CQ53</accession>
<accession>Q55P84</accession>
<accession>Q5KE73</accession>
<gene>
    <name type="primary">SNU13</name>
    <name type="ordered locus">CNBG3280</name>
</gene>
<organism>
    <name type="scientific">Cryptococcus neoformans var. neoformans serotype D (strain B-3501A)</name>
    <name type="common">Filobasidiella neoformans</name>
    <dbReference type="NCBI Taxonomy" id="283643"/>
    <lineage>
        <taxon>Eukaryota</taxon>
        <taxon>Fungi</taxon>
        <taxon>Dikarya</taxon>
        <taxon>Basidiomycota</taxon>
        <taxon>Agaricomycotina</taxon>
        <taxon>Tremellomycetes</taxon>
        <taxon>Tremellales</taxon>
        <taxon>Cryptococcaceae</taxon>
        <taxon>Cryptococcus</taxon>
        <taxon>Cryptococcus neoformans species complex</taxon>
    </lineage>
</organism>
<feature type="chain" id="PRO_0000410237" description="13 kDa ribonucleoprotein-associated protein">
    <location>
        <begin position="1"/>
        <end position="127"/>
    </location>
</feature>
<dbReference type="EMBL" id="AAEY01000038">
    <property type="protein sequence ID" value="EAL19700.1"/>
    <property type="molecule type" value="Genomic_DNA"/>
</dbReference>
<dbReference type="RefSeq" id="XP_774347.1">
    <property type="nucleotide sequence ID" value="XM_769254.1"/>
</dbReference>
<dbReference type="SMR" id="P0CQ53"/>
<dbReference type="EnsemblFungi" id="AAW44542">
    <property type="protein sequence ID" value="AAW44542"/>
    <property type="gene ID" value="CNG01500"/>
</dbReference>
<dbReference type="GeneID" id="4937364"/>
<dbReference type="KEGG" id="cnb:CNBG3280"/>
<dbReference type="VEuPathDB" id="FungiDB:CNBG3280"/>
<dbReference type="HOGENOM" id="CLU_084513_4_1_1"/>
<dbReference type="GO" id="GO:0005730">
    <property type="term" value="C:nucleolus"/>
    <property type="evidence" value="ECO:0007669"/>
    <property type="project" value="UniProtKB-SubCell"/>
</dbReference>
<dbReference type="GO" id="GO:0005681">
    <property type="term" value="C:spliceosomal complex"/>
    <property type="evidence" value="ECO:0007669"/>
    <property type="project" value="UniProtKB-KW"/>
</dbReference>
<dbReference type="GO" id="GO:0003723">
    <property type="term" value="F:RNA binding"/>
    <property type="evidence" value="ECO:0007669"/>
    <property type="project" value="UniProtKB-KW"/>
</dbReference>
<dbReference type="GO" id="GO:0006397">
    <property type="term" value="P:mRNA processing"/>
    <property type="evidence" value="ECO:0007669"/>
    <property type="project" value="UniProtKB-KW"/>
</dbReference>
<dbReference type="GO" id="GO:0008380">
    <property type="term" value="P:RNA splicing"/>
    <property type="evidence" value="ECO:0007669"/>
    <property type="project" value="UniProtKB-KW"/>
</dbReference>
<dbReference type="GO" id="GO:0006364">
    <property type="term" value="P:rRNA processing"/>
    <property type="evidence" value="ECO:0007669"/>
    <property type="project" value="UniProtKB-KW"/>
</dbReference>
<dbReference type="CDD" id="cd21104">
    <property type="entry name" value="SNU13"/>
    <property type="match status" value="1"/>
</dbReference>
<dbReference type="FunFam" id="3.30.1330.30:FF:000002">
    <property type="entry name" value="NHP2-like protein 1 homolog"/>
    <property type="match status" value="1"/>
</dbReference>
<dbReference type="Gene3D" id="3.30.1330.30">
    <property type="match status" value="1"/>
</dbReference>
<dbReference type="InterPro" id="IPR050257">
    <property type="entry name" value="eL8/uL1-like"/>
</dbReference>
<dbReference type="InterPro" id="IPR002415">
    <property type="entry name" value="H/ACA_rnp_Nhp2-like"/>
</dbReference>
<dbReference type="InterPro" id="IPR029064">
    <property type="entry name" value="Ribosomal_eL30-like_sf"/>
</dbReference>
<dbReference type="InterPro" id="IPR004037">
    <property type="entry name" value="Ribosomal_eL8-like_CS"/>
</dbReference>
<dbReference type="InterPro" id="IPR004038">
    <property type="entry name" value="Ribosomal_eL8/eL30/eS12/Gad45"/>
</dbReference>
<dbReference type="InterPro" id="IPR018492">
    <property type="entry name" value="Ribosomal_eL8/Nhp2"/>
</dbReference>
<dbReference type="PANTHER" id="PTHR23105">
    <property type="entry name" value="RIBOSOMAL PROTEIN L7AE FAMILY MEMBER"/>
    <property type="match status" value="1"/>
</dbReference>
<dbReference type="Pfam" id="PF01248">
    <property type="entry name" value="Ribosomal_L7Ae"/>
    <property type="match status" value="1"/>
</dbReference>
<dbReference type="PRINTS" id="PR00881">
    <property type="entry name" value="L7ARS6FAMILY"/>
</dbReference>
<dbReference type="PRINTS" id="PR00883">
    <property type="entry name" value="NUCLEARHMG"/>
</dbReference>
<dbReference type="SUPFAM" id="SSF55315">
    <property type="entry name" value="L30e-like"/>
    <property type="match status" value="1"/>
</dbReference>
<dbReference type="PROSITE" id="PS01082">
    <property type="entry name" value="RIBOSOMAL_L7AE"/>
    <property type="match status" value="1"/>
</dbReference>
<keyword id="KW-0507">mRNA processing</keyword>
<keyword id="KW-0508">mRNA splicing</keyword>
<keyword id="KW-0539">Nucleus</keyword>
<keyword id="KW-0687">Ribonucleoprotein</keyword>
<keyword id="KW-0690">Ribosome biogenesis</keyword>
<keyword id="KW-0694">RNA-binding</keyword>
<keyword id="KW-0698">rRNA processing</keyword>
<keyword id="KW-0747">Spliceosome</keyword>
<name>SNU13_CRYNB</name>
<sequence>MSAQPNPKAFPLANAQLTNQILDLIQQAQHYKQLKKGANEATKTLNRGICEFIVMTADVEPIEIVLHLPLLCEDKNVPYVFLPSKTALGRACGVSRPVIAASVTTNEARELNAQIQAVKNEIEKLLI</sequence>
<proteinExistence type="inferred from homology"/>
<protein>
    <recommendedName>
        <fullName>13 kDa ribonucleoprotein-associated protein</fullName>
    </recommendedName>
</protein>